<accession>A8L1W8</accession>
<gene>
    <name evidence="1" type="primary">ndk</name>
    <name type="ordered locus">Franean1_5270</name>
</gene>
<protein>
    <recommendedName>
        <fullName evidence="1">Nucleoside diphosphate kinase</fullName>
        <shortName evidence="1">NDK</shortName>
        <shortName evidence="1">NDP kinase</shortName>
        <ecNumber evidence="1">2.7.4.6</ecNumber>
    </recommendedName>
    <alternativeName>
        <fullName evidence="1">Nucleoside-2-P kinase</fullName>
    </alternativeName>
</protein>
<reference key="1">
    <citation type="journal article" date="2007" name="Genome Res.">
        <title>Genome characteristics of facultatively symbiotic Frankia sp. strains reflect host range and host plant biogeography.</title>
        <authorList>
            <person name="Normand P."/>
            <person name="Lapierre P."/>
            <person name="Tisa L.S."/>
            <person name="Gogarten J.P."/>
            <person name="Alloisio N."/>
            <person name="Bagnarol E."/>
            <person name="Bassi C.A."/>
            <person name="Berry A.M."/>
            <person name="Bickhart D.M."/>
            <person name="Choisne N."/>
            <person name="Couloux A."/>
            <person name="Cournoyer B."/>
            <person name="Cruveiller S."/>
            <person name="Daubin V."/>
            <person name="Demange N."/>
            <person name="Francino M.P."/>
            <person name="Goltsman E."/>
            <person name="Huang Y."/>
            <person name="Kopp O.R."/>
            <person name="Labarre L."/>
            <person name="Lapidus A."/>
            <person name="Lavire C."/>
            <person name="Marechal J."/>
            <person name="Martinez M."/>
            <person name="Mastronunzio J.E."/>
            <person name="Mullin B.C."/>
            <person name="Niemann J."/>
            <person name="Pujic P."/>
            <person name="Rawnsley T."/>
            <person name="Rouy Z."/>
            <person name="Schenowitz C."/>
            <person name="Sellstedt A."/>
            <person name="Tavares F."/>
            <person name="Tomkins J.P."/>
            <person name="Vallenet D."/>
            <person name="Valverde C."/>
            <person name="Wall L.G."/>
            <person name="Wang Y."/>
            <person name="Medigue C."/>
            <person name="Benson D.R."/>
        </authorList>
    </citation>
    <scope>NUCLEOTIDE SEQUENCE [LARGE SCALE GENOMIC DNA]</scope>
    <source>
        <strain>EAN1pec</strain>
    </source>
</reference>
<organism>
    <name type="scientific">Parafrankia sp. (strain EAN1pec)</name>
    <dbReference type="NCBI Taxonomy" id="298653"/>
    <lineage>
        <taxon>Bacteria</taxon>
        <taxon>Bacillati</taxon>
        <taxon>Actinomycetota</taxon>
        <taxon>Actinomycetes</taxon>
        <taxon>Frankiales</taxon>
        <taxon>Frankiaceae</taxon>
        <taxon>Parafrankia</taxon>
    </lineage>
</organism>
<proteinExistence type="inferred from homology"/>
<keyword id="KW-0067">ATP-binding</keyword>
<keyword id="KW-0963">Cytoplasm</keyword>
<keyword id="KW-0418">Kinase</keyword>
<keyword id="KW-0460">Magnesium</keyword>
<keyword id="KW-0479">Metal-binding</keyword>
<keyword id="KW-0546">Nucleotide metabolism</keyword>
<keyword id="KW-0547">Nucleotide-binding</keyword>
<keyword id="KW-0597">Phosphoprotein</keyword>
<keyword id="KW-0808">Transferase</keyword>
<dbReference type="EC" id="2.7.4.6" evidence="1"/>
<dbReference type="EMBL" id="CP000820">
    <property type="protein sequence ID" value="ABW14628.1"/>
    <property type="molecule type" value="Genomic_DNA"/>
</dbReference>
<dbReference type="RefSeq" id="WP_018500225.1">
    <property type="nucleotide sequence ID" value="NC_009921.1"/>
</dbReference>
<dbReference type="SMR" id="A8L1W8"/>
<dbReference type="STRING" id="298653.Franean1_5270"/>
<dbReference type="KEGG" id="fre:Franean1_5270"/>
<dbReference type="eggNOG" id="COG0105">
    <property type="taxonomic scope" value="Bacteria"/>
</dbReference>
<dbReference type="HOGENOM" id="CLU_060216_6_3_11"/>
<dbReference type="GO" id="GO:0005737">
    <property type="term" value="C:cytoplasm"/>
    <property type="evidence" value="ECO:0007669"/>
    <property type="project" value="UniProtKB-SubCell"/>
</dbReference>
<dbReference type="GO" id="GO:0005524">
    <property type="term" value="F:ATP binding"/>
    <property type="evidence" value="ECO:0007669"/>
    <property type="project" value="UniProtKB-UniRule"/>
</dbReference>
<dbReference type="GO" id="GO:0046872">
    <property type="term" value="F:metal ion binding"/>
    <property type="evidence" value="ECO:0007669"/>
    <property type="project" value="UniProtKB-KW"/>
</dbReference>
<dbReference type="GO" id="GO:0004550">
    <property type="term" value="F:nucleoside diphosphate kinase activity"/>
    <property type="evidence" value="ECO:0007669"/>
    <property type="project" value="UniProtKB-UniRule"/>
</dbReference>
<dbReference type="GO" id="GO:0006241">
    <property type="term" value="P:CTP biosynthetic process"/>
    <property type="evidence" value="ECO:0007669"/>
    <property type="project" value="UniProtKB-UniRule"/>
</dbReference>
<dbReference type="GO" id="GO:0006183">
    <property type="term" value="P:GTP biosynthetic process"/>
    <property type="evidence" value="ECO:0007669"/>
    <property type="project" value="UniProtKB-UniRule"/>
</dbReference>
<dbReference type="GO" id="GO:0006228">
    <property type="term" value="P:UTP biosynthetic process"/>
    <property type="evidence" value="ECO:0007669"/>
    <property type="project" value="UniProtKB-UniRule"/>
</dbReference>
<dbReference type="CDD" id="cd04413">
    <property type="entry name" value="NDPk_I"/>
    <property type="match status" value="1"/>
</dbReference>
<dbReference type="FunFam" id="3.30.70.141:FF:000003">
    <property type="entry name" value="Nucleoside diphosphate kinase"/>
    <property type="match status" value="1"/>
</dbReference>
<dbReference type="Gene3D" id="3.30.70.141">
    <property type="entry name" value="Nucleoside diphosphate kinase-like domain"/>
    <property type="match status" value="1"/>
</dbReference>
<dbReference type="HAMAP" id="MF_00451">
    <property type="entry name" value="NDP_kinase"/>
    <property type="match status" value="1"/>
</dbReference>
<dbReference type="InterPro" id="IPR034907">
    <property type="entry name" value="NDK-like_dom"/>
</dbReference>
<dbReference type="InterPro" id="IPR036850">
    <property type="entry name" value="NDK-like_dom_sf"/>
</dbReference>
<dbReference type="InterPro" id="IPR001564">
    <property type="entry name" value="Nucleoside_diP_kinase"/>
</dbReference>
<dbReference type="InterPro" id="IPR023005">
    <property type="entry name" value="Nucleoside_diP_kinase_AS"/>
</dbReference>
<dbReference type="NCBIfam" id="NF001908">
    <property type="entry name" value="PRK00668.1"/>
    <property type="match status" value="1"/>
</dbReference>
<dbReference type="PANTHER" id="PTHR11349">
    <property type="entry name" value="NUCLEOSIDE DIPHOSPHATE KINASE"/>
    <property type="match status" value="1"/>
</dbReference>
<dbReference type="Pfam" id="PF00334">
    <property type="entry name" value="NDK"/>
    <property type="match status" value="1"/>
</dbReference>
<dbReference type="PRINTS" id="PR01243">
    <property type="entry name" value="NUCDPKINASE"/>
</dbReference>
<dbReference type="SMART" id="SM00562">
    <property type="entry name" value="NDK"/>
    <property type="match status" value="1"/>
</dbReference>
<dbReference type="SUPFAM" id="SSF54919">
    <property type="entry name" value="Nucleoside diphosphate kinase, NDK"/>
    <property type="match status" value="1"/>
</dbReference>
<dbReference type="PROSITE" id="PS00469">
    <property type="entry name" value="NDPK"/>
    <property type="match status" value="1"/>
</dbReference>
<dbReference type="PROSITE" id="PS51374">
    <property type="entry name" value="NDPK_LIKE"/>
    <property type="match status" value="1"/>
</dbReference>
<feature type="chain" id="PRO_1000124969" description="Nucleoside diphosphate kinase">
    <location>
        <begin position="1"/>
        <end position="137"/>
    </location>
</feature>
<feature type="active site" description="Pros-phosphohistidine intermediate" evidence="1">
    <location>
        <position position="117"/>
    </location>
</feature>
<feature type="binding site" evidence="1">
    <location>
        <position position="11"/>
    </location>
    <ligand>
        <name>ATP</name>
        <dbReference type="ChEBI" id="CHEBI:30616"/>
    </ligand>
</feature>
<feature type="binding site" evidence="1">
    <location>
        <position position="59"/>
    </location>
    <ligand>
        <name>ATP</name>
        <dbReference type="ChEBI" id="CHEBI:30616"/>
    </ligand>
</feature>
<feature type="binding site" evidence="1">
    <location>
        <position position="87"/>
    </location>
    <ligand>
        <name>ATP</name>
        <dbReference type="ChEBI" id="CHEBI:30616"/>
    </ligand>
</feature>
<feature type="binding site" evidence="1">
    <location>
        <position position="93"/>
    </location>
    <ligand>
        <name>ATP</name>
        <dbReference type="ChEBI" id="CHEBI:30616"/>
    </ligand>
</feature>
<feature type="binding site" evidence="1">
    <location>
        <position position="104"/>
    </location>
    <ligand>
        <name>ATP</name>
        <dbReference type="ChEBI" id="CHEBI:30616"/>
    </ligand>
</feature>
<feature type="binding site" evidence="1">
    <location>
        <position position="114"/>
    </location>
    <ligand>
        <name>ATP</name>
        <dbReference type="ChEBI" id="CHEBI:30616"/>
    </ligand>
</feature>
<name>NDK_PARS2</name>
<comment type="function">
    <text evidence="1">Major role in the synthesis of nucleoside triphosphates other than ATP. The ATP gamma phosphate is transferred to the NDP beta phosphate via a ping-pong mechanism, using a phosphorylated active-site intermediate.</text>
</comment>
<comment type="catalytic activity">
    <reaction evidence="1">
        <text>a 2'-deoxyribonucleoside 5'-diphosphate + ATP = a 2'-deoxyribonucleoside 5'-triphosphate + ADP</text>
        <dbReference type="Rhea" id="RHEA:44640"/>
        <dbReference type="ChEBI" id="CHEBI:30616"/>
        <dbReference type="ChEBI" id="CHEBI:61560"/>
        <dbReference type="ChEBI" id="CHEBI:73316"/>
        <dbReference type="ChEBI" id="CHEBI:456216"/>
        <dbReference type="EC" id="2.7.4.6"/>
    </reaction>
</comment>
<comment type="catalytic activity">
    <reaction evidence="1">
        <text>a ribonucleoside 5'-diphosphate + ATP = a ribonucleoside 5'-triphosphate + ADP</text>
        <dbReference type="Rhea" id="RHEA:18113"/>
        <dbReference type="ChEBI" id="CHEBI:30616"/>
        <dbReference type="ChEBI" id="CHEBI:57930"/>
        <dbReference type="ChEBI" id="CHEBI:61557"/>
        <dbReference type="ChEBI" id="CHEBI:456216"/>
        <dbReference type="EC" id="2.7.4.6"/>
    </reaction>
</comment>
<comment type="cofactor">
    <cofactor evidence="1">
        <name>Mg(2+)</name>
        <dbReference type="ChEBI" id="CHEBI:18420"/>
    </cofactor>
</comment>
<comment type="subunit">
    <text evidence="1">Homotetramer.</text>
</comment>
<comment type="subcellular location">
    <subcellularLocation>
        <location evidence="1">Cytoplasm</location>
    </subcellularLocation>
</comment>
<comment type="similarity">
    <text evidence="1">Belongs to the NDK family.</text>
</comment>
<evidence type="ECO:0000255" key="1">
    <source>
        <dbReference type="HAMAP-Rule" id="MF_00451"/>
    </source>
</evidence>
<sequence length="137" mass="14572">MSAERTLILVKPDGVSRGLVGEVVGRIERKGLKIVALELRTLERSVAETHYGEHASKPFFGELVEFITSGPLVALVAEGPRAVEALRGLIGATDPVKAAPGSLRGDFALEIGQNLIHGSDSPESAKREIDLFFPGLS</sequence>